<accession>O30394</accession>
<protein>
    <recommendedName>
        <fullName evidence="1">Thymidylate synthase</fullName>
        <shortName evidence="1">TS</shortName>
        <shortName evidence="1">TSase</shortName>
        <ecNumber evidence="1">2.1.1.45</ecNumber>
    </recommendedName>
    <alternativeName>
        <fullName evidence="2">Thymidylate synthase A</fullName>
        <shortName evidence="2">TS A</shortName>
        <shortName evidence="2">TSase A</shortName>
    </alternativeName>
</protein>
<keyword id="KW-0963">Cytoplasm</keyword>
<keyword id="KW-0489">Methyltransferase</keyword>
<keyword id="KW-0545">Nucleotide biosynthesis</keyword>
<keyword id="KW-0808">Transferase</keyword>
<name>TYSY_BACAT</name>
<organism>
    <name type="scientific">Bacillus atrophaeus</name>
    <dbReference type="NCBI Taxonomy" id="1452"/>
    <lineage>
        <taxon>Bacteria</taxon>
        <taxon>Bacillati</taxon>
        <taxon>Bacillota</taxon>
        <taxon>Bacilli</taxon>
        <taxon>Bacillales</taxon>
        <taxon>Bacillaceae</taxon>
        <taxon>Bacillus</taxon>
    </lineage>
</organism>
<proteinExistence type="inferred from homology"/>
<sequence>SEVPILTTKKLAWKTAIKELLWIWQLKSNDVNDLNKMSVHIWDQWKQEDGTIGHAYGFQLGKKNRSLNGEKVDQVDYLLHQLKNNPSSRRHITMLWNPDELDAMALTPCVYETQWYVKHGKLHLEVRARSNDMALGNPFNVFQYNVLQRMIAQVTGYELGEYIFNIGDCHVYTRHIDNLKIQMEREQFEAPELWINPEVKDFYDFTIDDFKLINYKHGDKLLFEVRV</sequence>
<evidence type="ECO:0000255" key="1">
    <source>
        <dbReference type="HAMAP-Rule" id="MF_00008"/>
    </source>
</evidence>
<evidence type="ECO:0000303" key="2">
    <source>
    </source>
</evidence>
<gene>
    <name evidence="1" type="primary">thyA</name>
</gene>
<dbReference type="EC" id="2.1.1.45" evidence="1"/>
<dbReference type="EMBL" id="AF004101">
    <property type="protein sequence ID" value="AAC26323.1"/>
    <property type="molecule type" value="Genomic_DNA"/>
</dbReference>
<dbReference type="SMR" id="O30394"/>
<dbReference type="UniPathway" id="UPA00575"/>
<dbReference type="GO" id="GO:0005829">
    <property type="term" value="C:cytosol"/>
    <property type="evidence" value="ECO:0007669"/>
    <property type="project" value="TreeGrafter"/>
</dbReference>
<dbReference type="GO" id="GO:0004799">
    <property type="term" value="F:thymidylate synthase activity"/>
    <property type="evidence" value="ECO:0007669"/>
    <property type="project" value="UniProtKB-EC"/>
</dbReference>
<dbReference type="GO" id="GO:0006231">
    <property type="term" value="P:dTMP biosynthetic process"/>
    <property type="evidence" value="ECO:0007669"/>
    <property type="project" value="InterPro"/>
</dbReference>
<dbReference type="GO" id="GO:0006235">
    <property type="term" value="P:dTTP biosynthetic process"/>
    <property type="evidence" value="ECO:0007669"/>
    <property type="project" value="UniProtKB-UniPathway"/>
</dbReference>
<dbReference type="GO" id="GO:0032259">
    <property type="term" value="P:methylation"/>
    <property type="evidence" value="ECO:0007669"/>
    <property type="project" value="UniProtKB-KW"/>
</dbReference>
<dbReference type="CDD" id="cd00351">
    <property type="entry name" value="TS_Pyrimidine_HMase"/>
    <property type="match status" value="1"/>
</dbReference>
<dbReference type="FunFam" id="3.30.572.10:FF:000010">
    <property type="entry name" value="Thymidylate synthase 1"/>
    <property type="match status" value="1"/>
</dbReference>
<dbReference type="Gene3D" id="3.30.572.10">
    <property type="entry name" value="Thymidylate synthase/dCMP hydroxymethylase domain"/>
    <property type="match status" value="1"/>
</dbReference>
<dbReference type="HAMAP" id="MF_00008">
    <property type="entry name" value="Thymidy_synth_bact"/>
    <property type="match status" value="1"/>
</dbReference>
<dbReference type="InterPro" id="IPR045097">
    <property type="entry name" value="Thymidate_synth/dCMP_Mease"/>
</dbReference>
<dbReference type="InterPro" id="IPR023451">
    <property type="entry name" value="Thymidate_synth/dCMP_Mease_dom"/>
</dbReference>
<dbReference type="InterPro" id="IPR036926">
    <property type="entry name" value="Thymidate_synth/dCMP_Mease_sf"/>
</dbReference>
<dbReference type="InterPro" id="IPR000398">
    <property type="entry name" value="Thymidylate_synthase"/>
</dbReference>
<dbReference type="InterPro" id="IPR020940">
    <property type="entry name" value="Thymidylate_synthase_AS"/>
</dbReference>
<dbReference type="NCBIfam" id="TIGR03284">
    <property type="entry name" value="thym_sym"/>
    <property type="match status" value="1"/>
</dbReference>
<dbReference type="PANTHER" id="PTHR11548">
    <property type="entry name" value="THYMIDYLATE SYNTHASE 1"/>
    <property type="match status" value="1"/>
</dbReference>
<dbReference type="PANTHER" id="PTHR11548:SF1">
    <property type="entry name" value="THYMIDYLATE SYNTHASE 1"/>
    <property type="match status" value="1"/>
</dbReference>
<dbReference type="Pfam" id="PF00303">
    <property type="entry name" value="Thymidylat_synt"/>
    <property type="match status" value="1"/>
</dbReference>
<dbReference type="PRINTS" id="PR00108">
    <property type="entry name" value="THYMDSNTHASE"/>
</dbReference>
<dbReference type="SUPFAM" id="SSF55831">
    <property type="entry name" value="Thymidylate synthase/dCMP hydroxymethylase"/>
    <property type="match status" value="1"/>
</dbReference>
<dbReference type="PROSITE" id="PS00091">
    <property type="entry name" value="THYMIDYLATE_SYNTHASE"/>
    <property type="match status" value="1"/>
</dbReference>
<comment type="function">
    <text evidence="1">Catalyzes the reductive methylation of 2'-deoxyuridine-5'-monophosphate (dUMP) to 2'-deoxythymidine-5'-monophosphate (dTMP) while utilizing 5,10-methylenetetrahydrofolate (mTHF) as the methyl donor and reductant in the reaction, yielding dihydrofolate (DHF) as a by-product. This enzymatic reaction provides an intracellular de novo source of dTMP, an essential precursor for DNA biosynthesis.</text>
</comment>
<comment type="catalytic activity">
    <reaction evidence="1">
        <text>dUMP + (6R)-5,10-methylene-5,6,7,8-tetrahydrofolate = 7,8-dihydrofolate + dTMP</text>
        <dbReference type="Rhea" id="RHEA:12104"/>
        <dbReference type="ChEBI" id="CHEBI:15636"/>
        <dbReference type="ChEBI" id="CHEBI:57451"/>
        <dbReference type="ChEBI" id="CHEBI:63528"/>
        <dbReference type="ChEBI" id="CHEBI:246422"/>
        <dbReference type="EC" id="2.1.1.45"/>
    </reaction>
</comment>
<comment type="pathway">
    <text evidence="1">Pyrimidine metabolism; dTTP biosynthesis.</text>
</comment>
<comment type="subunit">
    <text evidence="1">Homodimer.</text>
</comment>
<comment type="subcellular location">
    <subcellularLocation>
        <location evidence="1">Cytoplasm</location>
    </subcellularLocation>
</comment>
<comment type="similarity">
    <text evidence="1">Belongs to the thymidylate synthase family. Bacterial-type ThyA subfamily.</text>
</comment>
<reference key="1">
    <citation type="journal article" date="1998" name="Mol. Gen. Genet.">
        <title>Genes encoding thymidylate synthases A and B in the genus Bacillus are members of two distinct families.</title>
        <authorList>
            <person name="Tam N.H."/>
            <person name="Borriss R."/>
        </authorList>
    </citation>
    <scope>NUCLEOTIDE SEQUENCE [GENOMIC DNA]</scope>
    <source>
        <strain>S223 / B0099 / 1208</strain>
    </source>
</reference>
<feature type="chain" id="PRO_0000140919" description="Thymidylate synthase">
    <location>
        <begin position="1" status="less than"/>
        <end position="227"/>
    </location>
</feature>
<feature type="active site" description="Nucleophile" evidence="1">
    <location>
        <position position="109"/>
    </location>
</feature>
<feature type="binding site" evidence="1">
    <location>
        <begin position="89"/>
        <end position="90"/>
    </location>
    <ligand>
        <name>dUMP</name>
        <dbReference type="ChEBI" id="CHEBI:246422"/>
        <note>ligand shared between dimeric partners</note>
    </ligand>
</feature>
<feature type="binding site" description="in other chain" evidence="1">
    <location>
        <begin position="129"/>
        <end position="132"/>
    </location>
    <ligand>
        <name>dUMP</name>
        <dbReference type="ChEBI" id="CHEBI:246422"/>
        <note>ligand shared between dimeric partners</note>
    </ligand>
</feature>
<feature type="binding site" evidence="1">
    <location>
        <position position="132"/>
    </location>
    <ligand>
        <name>(6R)-5,10-methylene-5,6,7,8-tetrahydrofolate</name>
        <dbReference type="ChEBI" id="CHEBI:15636"/>
    </ligand>
</feature>
<feature type="binding site" description="in other chain" evidence="1">
    <location>
        <position position="140"/>
    </location>
    <ligand>
        <name>dUMP</name>
        <dbReference type="ChEBI" id="CHEBI:246422"/>
        <note>ligand shared between dimeric partners</note>
    </ligand>
</feature>
<feature type="binding site" description="in other chain" evidence="1">
    <location>
        <begin position="170"/>
        <end position="172"/>
    </location>
    <ligand>
        <name>dUMP</name>
        <dbReference type="ChEBI" id="CHEBI:246422"/>
        <note>ligand shared between dimeric partners</note>
    </ligand>
</feature>
<feature type="non-terminal residue">
    <location>
        <position position="1"/>
    </location>
</feature>